<dbReference type="EMBL" id="AF010130">
    <property type="protein sequence ID" value="AAB70914.1"/>
    <property type="molecule type" value="mRNA"/>
</dbReference>
<dbReference type="CCDS" id="CCDS26954.1"/>
<dbReference type="PIR" id="T44447">
    <property type="entry name" value="T44447"/>
</dbReference>
<dbReference type="RefSeq" id="NP_032760.1">
    <property type="nucleotide sequence ID" value="NM_008734.3"/>
</dbReference>
<dbReference type="SMR" id="O35181"/>
<dbReference type="BioGRID" id="201846">
    <property type="interactions" value="1"/>
</dbReference>
<dbReference type="FunCoup" id="O35181">
    <property type="interactions" value="111"/>
</dbReference>
<dbReference type="STRING" id="10090.ENSMUSP00000136884"/>
<dbReference type="GlyGen" id="O35181">
    <property type="glycosylation" value="3 sites, 2 N-linked glycans (2 sites)"/>
</dbReference>
<dbReference type="iPTMnet" id="O35181"/>
<dbReference type="PhosphoSitePlus" id="O35181"/>
<dbReference type="PaxDb" id="10090-ENSMUSP00000136884"/>
<dbReference type="Antibodypedia" id="30013">
    <property type="antibodies" value="225 antibodies from 35 providers"/>
</dbReference>
<dbReference type="DNASU" id="18183"/>
<dbReference type="Ensembl" id="ENSMUST00000166968.9">
    <property type="protein sequence ID" value="ENSMUSP00000136884.2"/>
    <property type="gene ID" value="ENSMUSG00000041014.18"/>
</dbReference>
<dbReference type="GeneID" id="18183"/>
<dbReference type="KEGG" id="mmu:18183"/>
<dbReference type="UCSC" id="uc007tbz.2">
    <property type="organism name" value="mouse"/>
</dbReference>
<dbReference type="AGR" id="MGI:1097165"/>
<dbReference type="CTD" id="10718"/>
<dbReference type="MGI" id="MGI:1097165">
    <property type="gene designation" value="Nrg3"/>
</dbReference>
<dbReference type="VEuPathDB" id="HostDB:ENSMUSG00000041014"/>
<dbReference type="eggNOG" id="ENOG502QS97">
    <property type="taxonomic scope" value="Eukaryota"/>
</dbReference>
<dbReference type="GeneTree" id="ENSGT00940000156754"/>
<dbReference type="InParanoid" id="O35181"/>
<dbReference type="OMA" id="CHHDNEV"/>
<dbReference type="OrthoDB" id="9939684at2759"/>
<dbReference type="PhylomeDB" id="O35181"/>
<dbReference type="TreeFam" id="TF336537"/>
<dbReference type="Reactome" id="R-MMU-1227986">
    <property type="pathway name" value="Signaling by ERBB2"/>
</dbReference>
<dbReference type="Reactome" id="R-MMU-1236394">
    <property type="pathway name" value="Signaling by ERBB4"/>
</dbReference>
<dbReference type="Reactome" id="R-MMU-1250196">
    <property type="pathway name" value="SHC1 events in ERBB2 signaling"/>
</dbReference>
<dbReference type="Reactome" id="R-MMU-1250342">
    <property type="pathway name" value="PI3K events in ERBB4 signaling"/>
</dbReference>
<dbReference type="Reactome" id="R-MMU-1250347">
    <property type="pathway name" value="SHC1 events in ERBB4 signaling"/>
</dbReference>
<dbReference type="Reactome" id="R-MMU-1257604">
    <property type="pathway name" value="PIP3 activates AKT signaling"/>
</dbReference>
<dbReference type="Reactome" id="R-MMU-1963640">
    <property type="pathway name" value="GRB2 events in ERBB2 signaling"/>
</dbReference>
<dbReference type="Reactome" id="R-MMU-1963642">
    <property type="pathway name" value="PI3K events in ERBB2 signaling"/>
</dbReference>
<dbReference type="Reactome" id="R-MMU-5673001">
    <property type="pathway name" value="RAF/MAP kinase cascade"/>
</dbReference>
<dbReference type="Reactome" id="R-MMU-6785631">
    <property type="pathway name" value="ERBB2 Regulates Cell Motility"/>
</dbReference>
<dbReference type="Reactome" id="R-MMU-6811558">
    <property type="pathway name" value="PI5P, PP2A and IER3 Regulate PI3K/AKT Signaling"/>
</dbReference>
<dbReference type="Reactome" id="R-MMU-8847993">
    <property type="pathway name" value="ERBB2 Activates PTK6 Signaling"/>
</dbReference>
<dbReference type="Reactome" id="R-MMU-8863795">
    <property type="pathway name" value="Downregulation of ERBB2 signaling"/>
</dbReference>
<dbReference type="BioGRID-ORCS" id="18183">
    <property type="hits" value="4 hits in 77 CRISPR screens"/>
</dbReference>
<dbReference type="ChiTaRS" id="Nrg3">
    <property type="organism name" value="mouse"/>
</dbReference>
<dbReference type="PRO" id="PR:O35181"/>
<dbReference type="Proteomes" id="UP000000589">
    <property type="component" value="Chromosome 14"/>
</dbReference>
<dbReference type="RNAct" id="O35181">
    <property type="molecule type" value="protein"/>
</dbReference>
<dbReference type="Bgee" id="ENSMUSG00000041014">
    <property type="expression patterns" value="Expressed in lateral mesenchyme derived from mesoderm and 88 other cell types or tissues"/>
</dbReference>
<dbReference type="ExpressionAtlas" id="O35181">
    <property type="expression patterns" value="baseline and differential"/>
</dbReference>
<dbReference type="GO" id="GO:0005615">
    <property type="term" value="C:extracellular space"/>
    <property type="evidence" value="ECO:0000314"/>
    <property type="project" value="MGI"/>
</dbReference>
<dbReference type="GO" id="GO:0098978">
    <property type="term" value="C:glutamatergic synapse"/>
    <property type="evidence" value="ECO:0000314"/>
    <property type="project" value="SynGO"/>
</dbReference>
<dbReference type="GO" id="GO:0005886">
    <property type="term" value="C:plasma membrane"/>
    <property type="evidence" value="ECO:0007669"/>
    <property type="project" value="UniProtKB-SubCell"/>
</dbReference>
<dbReference type="GO" id="GO:0045202">
    <property type="term" value="C:synapse"/>
    <property type="evidence" value="ECO:0000314"/>
    <property type="project" value="SynGO"/>
</dbReference>
<dbReference type="GO" id="GO:0045499">
    <property type="term" value="F:chemorepellent activity"/>
    <property type="evidence" value="ECO:0000314"/>
    <property type="project" value="MGI"/>
</dbReference>
<dbReference type="GO" id="GO:0008083">
    <property type="term" value="F:growth factor activity"/>
    <property type="evidence" value="ECO:0007669"/>
    <property type="project" value="UniProtKB-KW"/>
</dbReference>
<dbReference type="GO" id="GO:0048018">
    <property type="term" value="F:receptor ligand activity"/>
    <property type="evidence" value="ECO:0000353"/>
    <property type="project" value="MGI"/>
</dbReference>
<dbReference type="GO" id="GO:0021842">
    <property type="term" value="P:chemorepulsion involved in interneuron migration from the subpallium to the cortex"/>
    <property type="evidence" value="ECO:0000315"/>
    <property type="project" value="MGI"/>
</dbReference>
<dbReference type="GO" id="GO:0038130">
    <property type="term" value="P:ERBB4 signaling pathway"/>
    <property type="evidence" value="ECO:0000353"/>
    <property type="project" value="MGI"/>
</dbReference>
<dbReference type="GO" id="GO:0038138">
    <property type="term" value="P:ERBB4-ERBB4 signaling pathway"/>
    <property type="evidence" value="ECO:0000353"/>
    <property type="project" value="MGI"/>
</dbReference>
<dbReference type="GO" id="GO:0035556">
    <property type="term" value="P:intracellular signal transduction"/>
    <property type="evidence" value="ECO:0000314"/>
    <property type="project" value="MGI"/>
</dbReference>
<dbReference type="GO" id="GO:0030879">
    <property type="term" value="P:mammary gland development"/>
    <property type="evidence" value="ECO:0000314"/>
    <property type="project" value="MGI"/>
</dbReference>
<dbReference type="GO" id="GO:0060596">
    <property type="term" value="P:mammary placode formation"/>
    <property type="evidence" value="ECO:0000315"/>
    <property type="project" value="MGI"/>
</dbReference>
<dbReference type="GO" id="GO:0050804">
    <property type="term" value="P:modulation of chemical synaptic transmission"/>
    <property type="evidence" value="ECO:0007669"/>
    <property type="project" value="Ensembl"/>
</dbReference>
<dbReference type="GO" id="GO:2001223">
    <property type="term" value="P:negative regulation of neuron migration"/>
    <property type="evidence" value="ECO:0000314"/>
    <property type="project" value="MGI"/>
</dbReference>
<dbReference type="GO" id="GO:0007389">
    <property type="term" value="P:pattern specification process"/>
    <property type="evidence" value="ECO:0000315"/>
    <property type="project" value="MGI"/>
</dbReference>
<dbReference type="GO" id="GO:0007416">
    <property type="term" value="P:synapse assembly"/>
    <property type="evidence" value="ECO:0000314"/>
    <property type="project" value="SynGO"/>
</dbReference>
<dbReference type="FunFam" id="2.10.25.10:FF:000267">
    <property type="entry name" value="pro-neuregulin-3, membrane-bound isoform"/>
    <property type="match status" value="1"/>
</dbReference>
<dbReference type="Gene3D" id="2.10.25.10">
    <property type="entry name" value="Laminin"/>
    <property type="match status" value="1"/>
</dbReference>
<dbReference type="InterPro" id="IPR000742">
    <property type="entry name" value="EGF-like_dom"/>
</dbReference>
<dbReference type="InterPro" id="IPR040180">
    <property type="entry name" value="Neuregulin"/>
</dbReference>
<dbReference type="PANTHER" id="PTHR11100">
    <property type="entry name" value="HEREGULIN-NEUREGULIN FAMILY MEMBER"/>
    <property type="match status" value="1"/>
</dbReference>
<dbReference type="PANTHER" id="PTHR11100:SF18">
    <property type="entry name" value="PRO-NEUREGULIN-3, MEMBRANE-BOUND ISOFORM"/>
    <property type="match status" value="1"/>
</dbReference>
<dbReference type="SUPFAM" id="SSF57196">
    <property type="entry name" value="EGF/Laminin"/>
    <property type="match status" value="1"/>
</dbReference>
<dbReference type="PROSITE" id="PS00022">
    <property type="entry name" value="EGF_1"/>
    <property type="match status" value="1"/>
</dbReference>
<dbReference type="PROSITE" id="PS01186">
    <property type="entry name" value="EGF_2"/>
    <property type="match status" value="1"/>
</dbReference>
<dbReference type="PROSITE" id="PS50026">
    <property type="entry name" value="EGF_3"/>
    <property type="match status" value="1"/>
</dbReference>
<organism>
    <name type="scientific">Mus musculus</name>
    <name type="common">Mouse</name>
    <dbReference type="NCBI Taxonomy" id="10090"/>
    <lineage>
        <taxon>Eukaryota</taxon>
        <taxon>Metazoa</taxon>
        <taxon>Chordata</taxon>
        <taxon>Craniata</taxon>
        <taxon>Vertebrata</taxon>
        <taxon>Euteleostomi</taxon>
        <taxon>Mammalia</taxon>
        <taxon>Eutheria</taxon>
        <taxon>Euarchontoglires</taxon>
        <taxon>Glires</taxon>
        <taxon>Rodentia</taxon>
        <taxon>Myomorpha</taxon>
        <taxon>Muroidea</taxon>
        <taxon>Muridae</taxon>
        <taxon>Murinae</taxon>
        <taxon>Mus</taxon>
        <taxon>Mus</taxon>
    </lineage>
</organism>
<name>NRG3_MOUSE</name>
<reference key="1">
    <citation type="journal article" date="1997" name="Proc. Natl. Acad. Sci. U.S.A.">
        <title>Neuregulin-3 (NRG3): a novel neural tissue-enriched protein that binds and activates ErbB4.</title>
        <authorList>
            <person name="Zhang D."/>
            <person name="Sliwkowski M.X."/>
            <person name="Mark M."/>
            <person name="Frantz G."/>
            <person name="Akita R."/>
            <person name="Sun Y."/>
            <person name="Hillan K."/>
            <person name="Crowley C."/>
            <person name="Brush J."/>
            <person name="Godowski P.J."/>
        </authorList>
    </citation>
    <scope>NUCLEOTIDE SEQUENCE [MRNA]</scope>
    <scope>FUNCTION</scope>
    <scope>INTERACTION WITH ERBB4</scope>
    <source>
        <tissue>Brain</tissue>
    </source>
</reference>
<comment type="function">
    <text evidence="5">Direct ligand for the ERBB4 tyrosine kinase receptor. Binding results in ligand-stimulated tyrosine phosphorylation and activation of the receptor. Does not bind to the EGF receptor, ERBB2 or ERBB3 receptors.</text>
</comment>
<comment type="subunit">
    <text evidence="5">Interacts with ERBB4.</text>
</comment>
<comment type="subcellular location">
    <molecule>Pro-neuregulin-3, membrane-bound isoform</molecule>
    <subcellularLocation>
        <location evidence="1">Cell membrane</location>
        <topology evidence="1">Single-pass type I membrane protein</topology>
    </subcellularLocation>
    <text evidence="1">Does not seem to be active.</text>
</comment>
<comment type="subcellular location">
    <molecule>Neuregulin-3</molecule>
    <subcellularLocation>
        <location evidence="1">Secreted</location>
    </subcellularLocation>
</comment>
<comment type="tissue specificity">
    <text>Expressed in sympathetic, motor, and sensory neurons.</text>
</comment>
<comment type="developmental stage">
    <text>Detected as early as 11 dpc. At 13 dpc detected mainly in the nervous system. At 16 dpc, detected in the brain, spinal cord, trigeminal, vestibular-cochlear, and spinal ganglia. In adults, expressed in spinal cord, and numerous brain regions.</text>
</comment>
<comment type="domain">
    <text evidence="1">The cytoplasmic domain may be involved in the regulation of trafficking and proteolytic processing. Regulation of the proteolytic processing involves initial intracellular domain dimerization (By similarity).</text>
</comment>
<comment type="domain">
    <text evidence="1">ERBB receptor binding is elicited entirely by the EGF-like domain.</text>
</comment>
<comment type="PTM">
    <text evidence="1">Proteolytic cleavage close to the plasma membrane on the external face leads to the release of the soluble growth factor form.</text>
</comment>
<comment type="PTM">
    <text evidence="1">Extensive glycosylation precedes the proteolytic cleavage.</text>
</comment>
<comment type="similarity">
    <text evidence="6">Belongs to the neuregulin family.</text>
</comment>
<sequence length="713" mass="77370">MSEGAAGASPPGAASAAAASAEEGTAAAAAAAAAGGGPDGGGEGAAEPPRELRCSDCIVWNRQQTWLCVVPLFIGFIGLGLSLMLLKWIVVGSVKEYVPTDLVDSKGMGQDPFFLSKPSSFPKAMETTTTTTSTTSPATPSAGGAASSRTPNRISTRLTTITRAPTRFPGHRVPIRASPRSTTARNTAAPPTVLSTTAPFFSSSTPGSRPPMPGAPSTQAMPSWPTAAYATSSYLHDSTPSWTLSPFQDAAAASSSSPSSTSSTTTTPETSTSPKFHTTTYSTERSEHFKPCRDKDLAYCLNDGECFVIETLTGSHKHCRCKEGYQGVRCDQFLPKTDSILSDPTDHLGIEFMESEDVYQRQVLSISCIIFGIVIVGMFCAAFYFKSKKQAKQIQEHLKESQNGKNYSLKASSTKSESLMKSHVHLQNYSKADRHPVTALEKIMESSFSAPQSFPEVTSPDRGSQPIKHHSPGQRSGMLHRNTFRRAPPSPRSRLGGIVGPAYQQLEESRIPDQDTIPCQGIEVRKTISHLPIQLWCVERPLDLKYVSNGLRTQQNASINMQLPSRETNPYFNSLDQKDLVGYLSPRANSVPIIPSMGLEETCMQMPGISDVKSIKWCKNSYSADIVNASMPVSDCLLEEQQEVKILLETVQEQIRILTDARRSEDFELASMETEDSASENTAFLPLSPTAKSEREAQFVLRNEIQRDSVLTK</sequence>
<proteinExistence type="evidence at protein level"/>
<feature type="chain" id="PRO_0000019483" description="Pro-neuregulin-3, membrane-bound isoform">
    <location>
        <begin position="1"/>
        <end position="713"/>
    </location>
</feature>
<feature type="chain" id="PRO_0000019484" description="Neuregulin-3">
    <location>
        <begin position="1"/>
        <end position="361"/>
    </location>
</feature>
<feature type="topological domain" description="Extracellular" evidence="2">
    <location>
        <begin position="1"/>
        <end position="362"/>
    </location>
</feature>
<feature type="transmembrane region" description="Helical; Note=Internal signal sequence" evidence="2">
    <location>
        <begin position="363"/>
        <end position="383"/>
    </location>
</feature>
<feature type="topological domain" description="Cytoplasmic" evidence="2">
    <location>
        <begin position="384"/>
        <end position="713"/>
    </location>
</feature>
<feature type="domain" description="EGF-like" evidence="3">
    <location>
        <begin position="288"/>
        <end position="331"/>
    </location>
</feature>
<feature type="region of interest" description="Disordered" evidence="4">
    <location>
        <begin position="28"/>
        <end position="48"/>
    </location>
</feature>
<feature type="region of interest" description="Disordered" evidence="4">
    <location>
        <begin position="119"/>
        <end position="220"/>
    </location>
</feature>
<feature type="region of interest" description="Disordered" evidence="4">
    <location>
        <begin position="251"/>
        <end position="282"/>
    </location>
</feature>
<feature type="region of interest" description="Disordered" evidence="4">
    <location>
        <begin position="449"/>
        <end position="496"/>
    </location>
</feature>
<feature type="compositionally biased region" description="Gly residues" evidence="4">
    <location>
        <begin position="34"/>
        <end position="44"/>
    </location>
</feature>
<feature type="compositionally biased region" description="Low complexity" evidence="4">
    <location>
        <begin position="127"/>
        <end position="148"/>
    </location>
</feature>
<feature type="compositionally biased region" description="Polar residues" evidence="4">
    <location>
        <begin position="149"/>
        <end position="163"/>
    </location>
</feature>
<feature type="compositionally biased region" description="Low complexity" evidence="4">
    <location>
        <begin position="195"/>
        <end position="207"/>
    </location>
</feature>
<feature type="compositionally biased region" description="Low complexity" evidence="4">
    <location>
        <begin position="254"/>
        <end position="274"/>
    </location>
</feature>
<feature type="disulfide bond" evidence="3">
    <location>
        <begin position="292"/>
        <end position="306"/>
    </location>
</feature>
<feature type="disulfide bond" evidence="3">
    <location>
        <begin position="300"/>
        <end position="319"/>
    </location>
</feature>
<feature type="disulfide bond" evidence="3">
    <location>
        <begin position="321"/>
        <end position="330"/>
    </location>
</feature>
<protein>
    <recommendedName>
        <fullName>Pro-neuregulin-3, membrane-bound isoform</fullName>
        <shortName>Pro-NRG3</shortName>
    </recommendedName>
    <component>
        <recommendedName>
            <fullName>Neuregulin-3</fullName>
            <shortName>NRG-3</shortName>
        </recommendedName>
    </component>
</protein>
<accession>O35181</accession>
<keyword id="KW-1003">Cell membrane</keyword>
<keyword id="KW-1015">Disulfide bond</keyword>
<keyword id="KW-0245">EGF-like domain</keyword>
<keyword id="KW-0339">Growth factor</keyword>
<keyword id="KW-0472">Membrane</keyword>
<keyword id="KW-1185">Reference proteome</keyword>
<keyword id="KW-0964">Secreted</keyword>
<keyword id="KW-0812">Transmembrane</keyword>
<keyword id="KW-1133">Transmembrane helix</keyword>
<gene>
    <name type="primary">Nrg3</name>
</gene>
<evidence type="ECO:0000250" key="1"/>
<evidence type="ECO:0000255" key="2"/>
<evidence type="ECO:0000255" key="3">
    <source>
        <dbReference type="PROSITE-ProRule" id="PRU00076"/>
    </source>
</evidence>
<evidence type="ECO:0000256" key="4">
    <source>
        <dbReference type="SAM" id="MobiDB-lite"/>
    </source>
</evidence>
<evidence type="ECO:0000269" key="5">
    <source>
    </source>
</evidence>
<evidence type="ECO:0000305" key="6"/>